<comment type="function">
    <text evidence="1">NDH-1 shuttles electrons from NADH, via FMN and iron-sulfur (Fe-S) centers, to quinones in the respiratory chain. The immediate electron acceptor for the enzyme in this species is believed to be ubiquinone. Couples the redox reaction to proton translocation (for every two electrons transferred, four hydrogen ions are translocated across the cytoplasmic membrane), and thus conserves the redox energy in a proton gradient.</text>
</comment>
<comment type="catalytic activity">
    <reaction evidence="1">
        <text>a quinone + NADH + 5 H(+)(in) = a quinol + NAD(+) + 4 H(+)(out)</text>
        <dbReference type="Rhea" id="RHEA:57888"/>
        <dbReference type="ChEBI" id="CHEBI:15378"/>
        <dbReference type="ChEBI" id="CHEBI:24646"/>
        <dbReference type="ChEBI" id="CHEBI:57540"/>
        <dbReference type="ChEBI" id="CHEBI:57945"/>
        <dbReference type="ChEBI" id="CHEBI:132124"/>
    </reaction>
</comment>
<comment type="subunit">
    <text evidence="1">NDH-1 is composed of 13 different subunits. Subunits NuoA, H, J, K, L, M, N constitute the membrane sector of the complex.</text>
</comment>
<comment type="subcellular location">
    <subcellularLocation>
        <location evidence="1">Cell inner membrane</location>
        <topology evidence="1">Multi-pass membrane protein</topology>
    </subcellularLocation>
</comment>
<comment type="similarity">
    <text evidence="1">Belongs to the complex I subunit 4L family.</text>
</comment>
<reference key="1">
    <citation type="journal article" date="2005" name="Nucleic Acids Res.">
        <title>Genome dynamics and diversity of Shigella species, the etiologic agents of bacillary dysentery.</title>
        <authorList>
            <person name="Yang F."/>
            <person name="Yang J."/>
            <person name="Zhang X."/>
            <person name="Chen L."/>
            <person name="Jiang Y."/>
            <person name="Yan Y."/>
            <person name="Tang X."/>
            <person name="Wang J."/>
            <person name="Xiong Z."/>
            <person name="Dong J."/>
            <person name="Xue Y."/>
            <person name="Zhu Y."/>
            <person name="Xu X."/>
            <person name="Sun L."/>
            <person name="Chen S."/>
            <person name="Nie H."/>
            <person name="Peng J."/>
            <person name="Xu J."/>
            <person name="Wang Y."/>
            <person name="Yuan Z."/>
            <person name="Wen Y."/>
            <person name="Yao Z."/>
            <person name="Shen Y."/>
            <person name="Qiang B."/>
            <person name="Hou Y."/>
            <person name="Yu J."/>
            <person name="Jin Q."/>
        </authorList>
    </citation>
    <scope>NUCLEOTIDE SEQUENCE [LARGE SCALE GENOMIC DNA]</scope>
    <source>
        <strain>Ss046</strain>
    </source>
</reference>
<feature type="chain" id="PRO_0000390240" description="NADH-quinone oxidoreductase subunit K">
    <location>
        <begin position="1"/>
        <end position="100"/>
    </location>
</feature>
<feature type="transmembrane region" description="Helical" evidence="1">
    <location>
        <begin position="4"/>
        <end position="24"/>
    </location>
</feature>
<feature type="transmembrane region" description="Helical" evidence="1">
    <location>
        <begin position="28"/>
        <end position="48"/>
    </location>
</feature>
<feature type="transmembrane region" description="Helical" evidence="1">
    <location>
        <begin position="60"/>
        <end position="80"/>
    </location>
</feature>
<organism>
    <name type="scientific">Shigella sonnei (strain Ss046)</name>
    <dbReference type="NCBI Taxonomy" id="300269"/>
    <lineage>
        <taxon>Bacteria</taxon>
        <taxon>Pseudomonadati</taxon>
        <taxon>Pseudomonadota</taxon>
        <taxon>Gammaproteobacteria</taxon>
        <taxon>Enterobacterales</taxon>
        <taxon>Enterobacteriaceae</taxon>
        <taxon>Shigella</taxon>
    </lineage>
</organism>
<accession>Q3YZT1</accession>
<gene>
    <name evidence="1" type="primary">nuoK</name>
    <name type="ordered locus">SSON_2336</name>
</gene>
<keyword id="KW-0997">Cell inner membrane</keyword>
<keyword id="KW-1003">Cell membrane</keyword>
<keyword id="KW-0472">Membrane</keyword>
<keyword id="KW-0520">NAD</keyword>
<keyword id="KW-0874">Quinone</keyword>
<keyword id="KW-1185">Reference proteome</keyword>
<keyword id="KW-1278">Translocase</keyword>
<keyword id="KW-0812">Transmembrane</keyword>
<keyword id="KW-1133">Transmembrane helix</keyword>
<keyword id="KW-0813">Transport</keyword>
<keyword id="KW-0830">Ubiquinone</keyword>
<name>NUOK_SHISS</name>
<dbReference type="EC" id="7.1.1.-" evidence="1"/>
<dbReference type="EMBL" id="CP000038">
    <property type="protein sequence ID" value="AAZ88981.1"/>
    <property type="molecule type" value="Genomic_DNA"/>
</dbReference>
<dbReference type="RefSeq" id="WP_000612640.1">
    <property type="nucleotide sequence ID" value="NC_007384.1"/>
</dbReference>
<dbReference type="SMR" id="Q3YZT1"/>
<dbReference type="GeneID" id="93774895"/>
<dbReference type="KEGG" id="ssn:SSON_2336"/>
<dbReference type="HOGENOM" id="CLU_144724_0_1_6"/>
<dbReference type="Proteomes" id="UP000002529">
    <property type="component" value="Chromosome"/>
</dbReference>
<dbReference type="GO" id="GO:0030964">
    <property type="term" value="C:NADH dehydrogenase complex"/>
    <property type="evidence" value="ECO:0007669"/>
    <property type="project" value="TreeGrafter"/>
</dbReference>
<dbReference type="GO" id="GO:0005886">
    <property type="term" value="C:plasma membrane"/>
    <property type="evidence" value="ECO:0007669"/>
    <property type="project" value="UniProtKB-SubCell"/>
</dbReference>
<dbReference type="GO" id="GO:0050136">
    <property type="term" value="F:NADH:ubiquinone reductase (non-electrogenic) activity"/>
    <property type="evidence" value="ECO:0007669"/>
    <property type="project" value="UniProtKB-UniRule"/>
</dbReference>
<dbReference type="GO" id="GO:0048038">
    <property type="term" value="F:quinone binding"/>
    <property type="evidence" value="ECO:0007669"/>
    <property type="project" value="UniProtKB-KW"/>
</dbReference>
<dbReference type="GO" id="GO:0042773">
    <property type="term" value="P:ATP synthesis coupled electron transport"/>
    <property type="evidence" value="ECO:0007669"/>
    <property type="project" value="InterPro"/>
</dbReference>
<dbReference type="FunFam" id="1.10.287.3510:FF:000001">
    <property type="entry name" value="NADH-quinone oxidoreductase subunit K"/>
    <property type="match status" value="1"/>
</dbReference>
<dbReference type="Gene3D" id="1.10.287.3510">
    <property type="match status" value="1"/>
</dbReference>
<dbReference type="HAMAP" id="MF_01456">
    <property type="entry name" value="NDH1_NuoK"/>
    <property type="match status" value="1"/>
</dbReference>
<dbReference type="InterPro" id="IPR001133">
    <property type="entry name" value="NADH_UbQ_OxRdtase_chain4L/K"/>
</dbReference>
<dbReference type="InterPro" id="IPR039428">
    <property type="entry name" value="NUOK/Mnh_C1-like"/>
</dbReference>
<dbReference type="NCBIfam" id="NF004319">
    <property type="entry name" value="PRK05715.1-1"/>
    <property type="match status" value="1"/>
</dbReference>
<dbReference type="NCBIfam" id="NF004320">
    <property type="entry name" value="PRK05715.1-2"/>
    <property type="match status" value="1"/>
</dbReference>
<dbReference type="PANTHER" id="PTHR11434:SF16">
    <property type="entry name" value="NADH-UBIQUINONE OXIDOREDUCTASE CHAIN 4L"/>
    <property type="match status" value="1"/>
</dbReference>
<dbReference type="PANTHER" id="PTHR11434">
    <property type="entry name" value="NADH-UBIQUINONE OXIDOREDUCTASE SUBUNIT ND4L"/>
    <property type="match status" value="1"/>
</dbReference>
<dbReference type="Pfam" id="PF00420">
    <property type="entry name" value="Oxidored_q2"/>
    <property type="match status" value="1"/>
</dbReference>
<evidence type="ECO:0000255" key="1">
    <source>
        <dbReference type="HAMAP-Rule" id="MF_01456"/>
    </source>
</evidence>
<sequence length="100" mass="10859">MIPLQHGLILAAILFILGLTGLVIRRNLLFMLIGLEIMINASALAFVVAGSYWGQTDGQVMYILAISLAAAEASIGLALLLQLHRRRQNLNIDSVSEMRG</sequence>
<proteinExistence type="inferred from homology"/>
<protein>
    <recommendedName>
        <fullName evidence="1">NADH-quinone oxidoreductase subunit K</fullName>
        <ecNumber evidence="1">7.1.1.-</ecNumber>
    </recommendedName>
    <alternativeName>
        <fullName evidence="1">NADH dehydrogenase I subunit K</fullName>
    </alternativeName>
    <alternativeName>
        <fullName evidence="1">NDH-1 subunit K</fullName>
    </alternativeName>
</protein>